<keyword id="KW-0028">Amino-acid biosynthesis</keyword>
<keyword id="KW-0057">Aromatic amino acid biosynthesis</keyword>
<keyword id="KW-0963">Cytoplasm</keyword>
<keyword id="KW-1185">Reference proteome</keyword>
<keyword id="KW-0808">Transferase</keyword>
<accession>B9DSK8</accession>
<name>AROA_STRU0</name>
<dbReference type="EC" id="2.5.1.19" evidence="1"/>
<dbReference type="EMBL" id="AM946015">
    <property type="protein sequence ID" value="CAR42616.1"/>
    <property type="molecule type" value="Genomic_DNA"/>
</dbReference>
<dbReference type="RefSeq" id="WP_012658672.1">
    <property type="nucleotide sequence ID" value="NC_012004.1"/>
</dbReference>
<dbReference type="SMR" id="B9DSK8"/>
<dbReference type="STRING" id="218495.SUB1192"/>
<dbReference type="KEGG" id="sub:SUB1192"/>
<dbReference type="eggNOG" id="COG0128">
    <property type="taxonomic scope" value="Bacteria"/>
</dbReference>
<dbReference type="HOGENOM" id="CLU_024321_0_1_9"/>
<dbReference type="OrthoDB" id="9809920at2"/>
<dbReference type="UniPathway" id="UPA00053">
    <property type="reaction ID" value="UER00089"/>
</dbReference>
<dbReference type="Proteomes" id="UP000000449">
    <property type="component" value="Chromosome"/>
</dbReference>
<dbReference type="GO" id="GO:0005737">
    <property type="term" value="C:cytoplasm"/>
    <property type="evidence" value="ECO:0007669"/>
    <property type="project" value="UniProtKB-SubCell"/>
</dbReference>
<dbReference type="GO" id="GO:0003866">
    <property type="term" value="F:3-phosphoshikimate 1-carboxyvinyltransferase activity"/>
    <property type="evidence" value="ECO:0007669"/>
    <property type="project" value="UniProtKB-UniRule"/>
</dbReference>
<dbReference type="GO" id="GO:0008652">
    <property type="term" value="P:amino acid biosynthetic process"/>
    <property type="evidence" value="ECO:0007669"/>
    <property type="project" value="UniProtKB-KW"/>
</dbReference>
<dbReference type="GO" id="GO:0009073">
    <property type="term" value="P:aromatic amino acid family biosynthetic process"/>
    <property type="evidence" value="ECO:0007669"/>
    <property type="project" value="UniProtKB-KW"/>
</dbReference>
<dbReference type="GO" id="GO:0009423">
    <property type="term" value="P:chorismate biosynthetic process"/>
    <property type="evidence" value="ECO:0007669"/>
    <property type="project" value="UniProtKB-UniRule"/>
</dbReference>
<dbReference type="CDD" id="cd01556">
    <property type="entry name" value="EPSP_synthase"/>
    <property type="match status" value="1"/>
</dbReference>
<dbReference type="FunFam" id="3.65.10.10:FF:000005">
    <property type="entry name" value="3-phosphoshikimate 1-carboxyvinyltransferase"/>
    <property type="match status" value="1"/>
</dbReference>
<dbReference type="FunFam" id="3.65.10.10:FF:000006">
    <property type="entry name" value="3-phosphoshikimate 1-carboxyvinyltransferase"/>
    <property type="match status" value="1"/>
</dbReference>
<dbReference type="Gene3D" id="3.65.10.10">
    <property type="entry name" value="Enolpyruvate transferase domain"/>
    <property type="match status" value="2"/>
</dbReference>
<dbReference type="HAMAP" id="MF_00210">
    <property type="entry name" value="EPSP_synth"/>
    <property type="match status" value="1"/>
</dbReference>
<dbReference type="InterPro" id="IPR001986">
    <property type="entry name" value="Enolpyruvate_Tfrase_dom"/>
</dbReference>
<dbReference type="InterPro" id="IPR036968">
    <property type="entry name" value="Enolpyruvate_Tfrase_sf"/>
</dbReference>
<dbReference type="InterPro" id="IPR006264">
    <property type="entry name" value="EPSP_synthase"/>
</dbReference>
<dbReference type="InterPro" id="IPR023193">
    <property type="entry name" value="EPSP_synthase_CS"/>
</dbReference>
<dbReference type="InterPro" id="IPR013792">
    <property type="entry name" value="RNA3'P_cycl/enolpyr_Trfase_a/b"/>
</dbReference>
<dbReference type="NCBIfam" id="TIGR01356">
    <property type="entry name" value="aroA"/>
    <property type="match status" value="1"/>
</dbReference>
<dbReference type="PANTHER" id="PTHR21090">
    <property type="entry name" value="AROM/DEHYDROQUINATE SYNTHASE"/>
    <property type="match status" value="1"/>
</dbReference>
<dbReference type="PANTHER" id="PTHR21090:SF5">
    <property type="entry name" value="PENTAFUNCTIONAL AROM POLYPEPTIDE"/>
    <property type="match status" value="1"/>
</dbReference>
<dbReference type="Pfam" id="PF00275">
    <property type="entry name" value="EPSP_synthase"/>
    <property type="match status" value="1"/>
</dbReference>
<dbReference type="PIRSF" id="PIRSF000505">
    <property type="entry name" value="EPSPS"/>
    <property type="match status" value="1"/>
</dbReference>
<dbReference type="SUPFAM" id="SSF55205">
    <property type="entry name" value="EPT/RTPC-like"/>
    <property type="match status" value="1"/>
</dbReference>
<dbReference type="PROSITE" id="PS00104">
    <property type="entry name" value="EPSP_SYNTHASE_1"/>
    <property type="match status" value="1"/>
</dbReference>
<dbReference type="PROSITE" id="PS00885">
    <property type="entry name" value="EPSP_SYNTHASE_2"/>
    <property type="match status" value="1"/>
</dbReference>
<sequence>MKLQINAGPLKGNVTVPGDKSISHRALIFGSIAEGKTEIKGLLKSQDVQRTLVALRHLGVTIEESDQKVIIQGKGFSGLTAPDSPLDMGNSGTSLRLLAGLLSGQDFPVQFFGDASLSQRPMDRIVIPLREMGARVEGQGPKHLPPITVLGSSQLTAINYQMPLASAQVKSAILLAALQTKGQTQVFEKAVTRNHTEVMIKQFGGEIFQSGKEIRIIGPQTLKGQSLTIPGDISSAAFWIVAALIIPGSAISIKNVGINPTRTGIIDLVKKMGGAIELTDRDDINQSATIHVSYSKLKGTRIAGEMIPRLIDELPIIALLATQAEGTTVVQDAQELRVKETDRIQVVTSLLRKMGADIEEKTDGFVIKGKTELHSCQADAFLDHRIGMMVAIAALLVKTGEMILNGEEAIQTSYPQFFKDLESLQHD</sequence>
<reference key="1">
    <citation type="journal article" date="2009" name="BMC Genomics">
        <title>Evidence for niche adaptation in the genome of the bovine pathogen Streptococcus uberis.</title>
        <authorList>
            <person name="Ward P.N."/>
            <person name="Holden M.T.G."/>
            <person name="Leigh J.A."/>
            <person name="Lennard N."/>
            <person name="Bignell A."/>
            <person name="Barron A."/>
            <person name="Clark L."/>
            <person name="Quail M.A."/>
            <person name="Woodward J."/>
            <person name="Barrell B.G."/>
            <person name="Egan S.A."/>
            <person name="Field T.R."/>
            <person name="Maskell D."/>
            <person name="Kehoe M."/>
            <person name="Dowson C.G."/>
            <person name="Chanter N."/>
            <person name="Whatmore A.M."/>
            <person name="Bentley S.D."/>
            <person name="Parkhill J."/>
        </authorList>
    </citation>
    <scope>NUCLEOTIDE SEQUENCE [LARGE SCALE GENOMIC DNA]</scope>
    <source>
        <strain>ATCC BAA-854 / 0140J</strain>
    </source>
</reference>
<proteinExistence type="inferred from homology"/>
<gene>
    <name evidence="1" type="primary">aroA</name>
    <name type="ordered locus">SUB1192</name>
</gene>
<protein>
    <recommendedName>
        <fullName evidence="1">3-phosphoshikimate 1-carboxyvinyltransferase</fullName>
        <ecNumber evidence="1">2.5.1.19</ecNumber>
    </recommendedName>
    <alternativeName>
        <fullName evidence="1">5-enolpyruvylshikimate-3-phosphate synthase</fullName>
        <shortName evidence="1">EPSP synthase</shortName>
        <shortName evidence="1">EPSPS</shortName>
    </alternativeName>
</protein>
<comment type="function">
    <text evidence="1">Catalyzes the transfer of the enolpyruvyl moiety of phosphoenolpyruvate (PEP) to the 5-hydroxyl of shikimate-3-phosphate (S3P) to produce enolpyruvyl shikimate-3-phosphate and inorganic phosphate.</text>
</comment>
<comment type="catalytic activity">
    <reaction evidence="1">
        <text>3-phosphoshikimate + phosphoenolpyruvate = 5-O-(1-carboxyvinyl)-3-phosphoshikimate + phosphate</text>
        <dbReference type="Rhea" id="RHEA:21256"/>
        <dbReference type="ChEBI" id="CHEBI:43474"/>
        <dbReference type="ChEBI" id="CHEBI:57701"/>
        <dbReference type="ChEBI" id="CHEBI:58702"/>
        <dbReference type="ChEBI" id="CHEBI:145989"/>
        <dbReference type="EC" id="2.5.1.19"/>
    </reaction>
    <physiologicalReaction direction="left-to-right" evidence="1">
        <dbReference type="Rhea" id="RHEA:21257"/>
    </physiologicalReaction>
</comment>
<comment type="pathway">
    <text evidence="1">Metabolic intermediate biosynthesis; chorismate biosynthesis; chorismate from D-erythrose 4-phosphate and phosphoenolpyruvate: step 6/7.</text>
</comment>
<comment type="subunit">
    <text evidence="1">Monomer.</text>
</comment>
<comment type="subcellular location">
    <subcellularLocation>
        <location evidence="1">Cytoplasm</location>
    </subcellularLocation>
</comment>
<comment type="similarity">
    <text evidence="1">Belongs to the EPSP synthase family.</text>
</comment>
<organism>
    <name type="scientific">Streptococcus uberis (strain ATCC BAA-854 / 0140J)</name>
    <dbReference type="NCBI Taxonomy" id="218495"/>
    <lineage>
        <taxon>Bacteria</taxon>
        <taxon>Bacillati</taxon>
        <taxon>Bacillota</taxon>
        <taxon>Bacilli</taxon>
        <taxon>Lactobacillales</taxon>
        <taxon>Streptococcaceae</taxon>
        <taxon>Streptococcus</taxon>
    </lineage>
</organism>
<evidence type="ECO:0000255" key="1">
    <source>
        <dbReference type="HAMAP-Rule" id="MF_00210"/>
    </source>
</evidence>
<feature type="chain" id="PRO_1000124710" description="3-phosphoshikimate 1-carboxyvinyltransferase">
    <location>
        <begin position="1"/>
        <end position="427"/>
    </location>
</feature>
<feature type="active site" description="Proton acceptor" evidence="1">
    <location>
        <position position="312"/>
    </location>
</feature>
<feature type="binding site" evidence="1">
    <location>
        <position position="20"/>
    </location>
    <ligand>
        <name>3-phosphoshikimate</name>
        <dbReference type="ChEBI" id="CHEBI:145989"/>
    </ligand>
</feature>
<feature type="binding site" evidence="1">
    <location>
        <position position="20"/>
    </location>
    <ligand>
        <name>phosphoenolpyruvate</name>
        <dbReference type="ChEBI" id="CHEBI:58702"/>
    </ligand>
</feature>
<feature type="binding site" evidence="1">
    <location>
        <position position="21"/>
    </location>
    <ligand>
        <name>3-phosphoshikimate</name>
        <dbReference type="ChEBI" id="CHEBI:145989"/>
    </ligand>
</feature>
<feature type="binding site" evidence="1">
    <location>
        <position position="25"/>
    </location>
    <ligand>
        <name>3-phosphoshikimate</name>
        <dbReference type="ChEBI" id="CHEBI:145989"/>
    </ligand>
</feature>
<feature type="binding site" evidence="1">
    <location>
        <position position="92"/>
    </location>
    <ligand>
        <name>phosphoenolpyruvate</name>
        <dbReference type="ChEBI" id="CHEBI:58702"/>
    </ligand>
</feature>
<feature type="binding site" evidence="1">
    <location>
        <position position="120"/>
    </location>
    <ligand>
        <name>phosphoenolpyruvate</name>
        <dbReference type="ChEBI" id="CHEBI:58702"/>
    </ligand>
</feature>
<feature type="binding site" evidence="1">
    <location>
        <position position="166"/>
    </location>
    <ligand>
        <name>3-phosphoshikimate</name>
        <dbReference type="ChEBI" id="CHEBI:145989"/>
    </ligand>
</feature>
<feature type="binding site" evidence="1">
    <location>
        <position position="168"/>
    </location>
    <ligand>
        <name>3-phosphoshikimate</name>
        <dbReference type="ChEBI" id="CHEBI:145989"/>
    </ligand>
</feature>
<feature type="binding site" evidence="1">
    <location>
        <position position="168"/>
    </location>
    <ligand>
        <name>phosphoenolpyruvate</name>
        <dbReference type="ChEBI" id="CHEBI:58702"/>
    </ligand>
</feature>
<feature type="binding site" evidence="1">
    <location>
        <position position="312"/>
    </location>
    <ligand>
        <name>3-phosphoshikimate</name>
        <dbReference type="ChEBI" id="CHEBI:145989"/>
    </ligand>
</feature>
<feature type="binding site" evidence="1">
    <location>
        <position position="339"/>
    </location>
    <ligand>
        <name>3-phosphoshikimate</name>
        <dbReference type="ChEBI" id="CHEBI:145989"/>
    </ligand>
</feature>
<feature type="binding site" evidence="1">
    <location>
        <position position="343"/>
    </location>
    <ligand>
        <name>phosphoenolpyruvate</name>
        <dbReference type="ChEBI" id="CHEBI:58702"/>
    </ligand>
</feature>
<feature type="binding site" evidence="1">
    <location>
        <position position="385"/>
    </location>
    <ligand>
        <name>phosphoenolpyruvate</name>
        <dbReference type="ChEBI" id="CHEBI:58702"/>
    </ligand>
</feature>